<dbReference type="EC" id="4.3.1.19"/>
<dbReference type="EMBL" id="LT708304">
    <property type="protein sequence ID" value="SIU00188.1"/>
    <property type="molecule type" value="Genomic_DNA"/>
</dbReference>
<dbReference type="RefSeq" id="NP_855237.1">
    <property type="nucleotide sequence ID" value="NC_002945.3"/>
</dbReference>
<dbReference type="RefSeq" id="WP_003407781.1">
    <property type="nucleotide sequence ID" value="NC_002945.4"/>
</dbReference>
<dbReference type="SMR" id="P66898"/>
<dbReference type="GeneID" id="45425543"/>
<dbReference type="KEGG" id="mbo:BQ2027_MB1585"/>
<dbReference type="PATRIC" id="fig|233413.5.peg.1732"/>
<dbReference type="UniPathway" id="UPA00047">
    <property type="reaction ID" value="UER00054"/>
</dbReference>
<dbReference type="Proteomes" id="UP000001419">
    <property type="component" value="Chromosome"/>
</dbReference>
<dbReference type="GO" id="GO:0003941">
    <property type="term" value="F:L-serine ammonia-lyase activity"/>
    <property type="evidence" value="ECO:0007669"/>
    <property type="project" value="TreeGrafter"/>
</dbReference>
<dbReference type="GO" id="GO:0030170">
    <property type="term" value="F:pyridoxal phosphate binding"/>
    <property type="evidence" value="ECO:0007669"/>
    <property type="project" value="InterPro"/>
</dbReference>
<dbReference type="GO" id="GO:0004794">
    <property type="term" value="F:threonine deaminase activity"/>
    <property type="evidence" value="ECO:0007669"/>
    <property type="project" value="UniProtKB-EC"/>
</dbReference>
<dbReference type="GO" id="GO:0009097">
    <property type="term" value="P:isoleucine biosynthetic process"/>
    <property type="evidence" value="ECO:0007669"/>
    <property type="project" value="UniProtKB-UniPathway"/>
</dbReference>
<dbReference type="GO" id="GO:0006565">
    <property type="term" value="P:L-serine catabolic process"/>
    <property type="evidence" value="ECO:0007669"/>
    <property type="project" value="TreeGrafter"/>
</dbReference>
<dbReference type="GO" id="GO:0006567">
    <property type="term" value="P:threonine catabolic process"/>
    <property type="evidence" value="ECO:0007669"/>
    <property type="project" value="TreeGrafter"/>
</dbReference>
<dbReference type="GO" id="GO:0006566">
    <property type="term" value="P:threonine metabolic process"/>
    <property type="evidence" value="ECO:0000250"/>
    <property type="project" value="UniProtKB"/>
</dbReference>
<dbReference type="CDD" id="cd04907">
    <property type="entry name" value="ACT_ThrD-I_2"/>
    <property type="match status" value="1"/>
</dbReference>
<dbReference type="CDD" id="cd01562">
    <property type="entry name" value="Thr-dehyd"/>
    <property type="match status" value="1"/>
</dbReference>
<dbReference type="FunFam" id="3.40.1020.10:FF:000002">
    <property type="entry name" value="L-threonine dehydratase"/>
    <property type="match status" value="1"/>
</dbReference>
<dbReference type="FunFam" id="3.40.50.1100:FF:000005">
    <property type="entry name" value="Threonine dehydratase catabolic"/>
    <property type="match status" value="1"/>
</dbReference>
<dbReference type="Gene3D" id="3.40.50.1100">
    <property type="match status" value="2"/>
</dbReference>
<dbReference type="Gene3D" id="3.40.1020.10">
    <property type="entry name" value="Biosynthetic Threonine Deaminase, Domain 3"/>
    <property type="match status" value="1"/>
</dbReference>
<dbReference type="InterPro" id="IPR011820">
    <property type="entry name" value="IlvA"/>
</dbReference>
<dbReference type="InterPro" id="IPR050147">
    <property type="entry name" value="Ser/Thr_Dehydratase"/>
</dbReference>
<dbReference type="InterPro" id="IPR000634">
    <property type="entry name" value="Ser/Thr_deHydtase_PyrdxlP-BS"/>
</dbReference>
<dbReference type="InterPro" id="IPR001721">
    <property type="entry name" value="TD_ACT-like"/>
</dbReference>
<dbReference type="InterPro" id="IPR038110">
    <property type="entry name" value="TD_ACT-like_sf"/>
</dbReference>
<dbReference type="InterPro" id="IPR001926">
    <property type="entry name" value="TrpB-like_PALP"/>
</dbReference>
<dbReference type="InterPro" id="IPR036052">
    <property type="entry name" value="TrpB-like_PALP_sf"/>
</dbReference>
<dbReference type="NCBIfam" id="NF006390">
    <property type="entry name" value="PRK08639.1"/>
    <property type="match status" value="1"/>
</dbReference>
<dbReference type="NCBIfam" id="TIGR02079">
    <property type="entry name" value="THD1"/>
    <property type="match status" value="1"/>
</dbReference>
<dbReference type="PANTHER" id="PTHR48078:SF11">
    <property type="entry name" value="THREONINE DEHYDRATASE, MITOCHONDRIAL"/>
    <property type="match status" value="1"/>
</dbReference>
<dbReference type="PANTHER" id="PTHR48078">
    <property type="entry name" value="THREONINE DEHYDRATASE, MITOCHONDRIAL-RELATED"/>
    <property type="match status" value="1"/>
</dbReference>
<dbReference type="Pfam" id="PF00291">
    <property type="entry name" value="PALP"/>
    <property type="match status" value="1"/>
</dbReference>
<dbReference type="Pfam" id="PF00585">
    <property type="entry name" value="Thr_dehydrat_C"/>
    <property type="match status" value="1"/>
</dbReference>
<dbReference type="SUPFAM" id="SSF53686">
    <property type="entry name" value="Tryptophan synthase beta subunit-like PLP-dependent enzymes"/>
    <property type="match status" value="1"/>
</dbReference>
<dbReference type="PROSITE" id="PS51672">
    <property type="entry name" value="ACT_LIKE"/>
    <property type="match status" value="1"/>
</dbReference>
<dbReference type="PROSITE" id="PS00165">
    <property type="entry name" value="DEHYDRATASE_SER_THR"/>
    <property type="match status" value="1"/>
</dbReference>
<comment type="function">
    <text evidence="1">Catalyzes the anaerobic formation of alpha-ketobutyrate and ammonia from threonine in a two-step reaction. The first step involved a dehydration of threonine and a production of enamine intermediates (aminocrotonate), which tautomerizes to its imine form (iminobutyrate). Both intermediates are unstable and short-lived. The second step is the nonenzymatic hydrolysis of the enamine/imine intermediates to form 2-ketobutyrate and free ammonia. In the low water environment of the cell, the second step is accelerated by RidA (By similarity).</text>
</comment>
<comment type="catalytic activity">
    <reaction>
        <text>L-threonine = 2-oxobutanoate + NH4(+)</text>
        <dbReference type="Rhea" id="RHEA:22108"/>
        <dbReference type="ChEBI" id="CHEBI:16763"/>
        <dbReference type="ChEBI" id="CHEBI:28938"/>
        <dbReference type="ChEBI" id="CHEBI:57926"/>
        <dbReference type="EC" id="4.3.1.19"/>
    </reaction>
</comment>
<comment type="cofactor">
    <cofactor evidence="1">
        <name>pyridoxal 5'-phosphate</name>
        <dbReference type="ChEBI" id="CHEBI:597326"/>
    </cofactor>
</comment>
<comment type="pathway">
    <text>Amino-acid biosynthesis; L-isoleucine biosynthesis; 2-oxobutanoate from L-threonine: step 1/1.</text>
</comment>
<comment type="subunit">
    <text evidence="1">Homotetramer.</text>
</comment>
<comment type="similarity">
    <text evidence="3">Belongs to the serine/threonine dehydratase family.</text>
</comment>
<keyword id="KW-0028">Amino-acid biosynthesis</keyword>
<keyword id="KW-0100">Branched-chain amino acid biosynthesis</keyword>
<keyword id="KW-0412">Isoleucine biosynthesis</keyword>
<keyword id="KW-0456">Lyase</keyword>
<keyword id="KW-0663">Pyridoxal phosphate</keyword>
<keyword id="KW-1185">Reference proteome</keyword>
<sequence>MSAELSQSPSSSPLFSLSGADIDRAAKRIAPVVTPTPLQPSDRLSAITGATVYLKREDLQTVRSYKLRGAYNLLVQLSDEELAAGVVCSSAGNHAQGFAYACRCLGVHGRVYVPAKTPKQKRDRIRYHGGEFIDLIVGGSTYDLAAAAALEDVERTGATLVPPFDDLRTIAGQGTIAVEVLGQLEDEPDLVVVPVGGGGCIAGITTYLAERTTNTAVLGVEPAGAAAMMAALAAGEPVTLDHVDQFVDGAAVNRAGTLTYAALAAAGDMVSLTTVDEGAVCTAMLDLYQNEGIIAEPAGALSVAGLLEADIEPGSTVVCLISGGNNDVSRYGEVLERSLVHLGLKHYFLVDFPQEPGALRRFLDDVLGPNDDITLFEYVKRNNRETGEALVGIELGSAADLDGLLARMRATDIHVEALEPGSPAYRYLL</sequence>
<gene>
    <name type="primary">ilvA</name>
    <name type="ordered locus">BQ2027_MB1585</name>
</gene>
<proteinExistence type="inferred from homology"/>
<protein>
    <recommendedName>
        <fullName>L-threonine dehydratase biosynthetic IlvA</fullName>
        <ecNumber>4.3.1.19</ecNumber>
    </recommendedName>
    <alternativeName>
        <fullName>Threonine deaminase</fullName>
    </alternativeName>
</protein>
<evidence type="ECO:0000250" key="1"/>
<evidence type="ECO:0000255" key="2">
    <source>
        <dbReference type="PROSITE-ProRule" id="PRU01008"/>
    </source>
</evidence>
<evidence type="ECO:0000305" key="3"/>
<feature type="chain" id="PRO_0000185578" description="L-threonine dehydratase biosynthetic IlvA">
    <location>
        <begin position="1"/>
        <end position="429"/>
    </location>
</feature>
<feature type="domain" description="ACT-like" evidence="2">
    <location>
        <begin position="346"/>
        <end position="420"/>
    </location>
</feature>
<feature type="binding site" evidence="1">
    <location>
        <position position="93"/>
    </location>
    <ligand>
        <name>pyridoxal 5'-phosphate</name>
        <dbReference type="ChEBI" id="CHEBI:597326"/>
    </ligand>
</feature>
<feature type="binding site" evidence="1">
    <location>
        <begin position="196"/>
        <end position="200"/>
    </location>
    <ligand>
        <name>pyridoxal 5'-phosphate</name>
        <dbReference type="ChEBI" id="CHEBI:597326"/>
    </ligand>
</feature>
<feature type="binding site" evidence="1">
    <location>
        <position position="322"/>
    </location>
    <ligand>
        <name>pyridoxal 5'-phosphate</name>
        <dbReference type="ChEBI" id="CHEBI:597326"/>
    </ligand>
</feature>
<feature type="modified residue" description="N6-(pyridoxal phosphate)lysine" evidence="1">
    <location>
        <position position="66"/>
    </location>
</feature>
<organism>
    <name type="scientific">Mycobacterium bovis (strain ATCC BAA-935 / AF2122/97)</name>
    <dbReference type="NCBI Taxonomy" id="233413"/>
    <lineage>
        <taxon>Bacteria</taxon>
        <taxon>Bacillati</taxon>
        <taxon>Actinomycetota</taxon>
        <taxon>Actinomycetes</taxon>
        <taxon>Mycobacteriales</taxon>
        <taxon>Mycobacteriaceae</taxon>
        <taxon>Mycobacterium</taxon>
        <taxon>Mycobacterium tuberculosis complex</taxon>
    </lineage>
</organism>
<reference key="1">
    <citation type="journal article" date="2003" name="Proc. Natl. Acad. Sci. U.S.A.">
        <title>The complete genome sequence of Mycobacterium bovis.</title>
        <authorList>
            <person name="Garnier T."/>
            <person name="Eiglmeier K."/>
            <person name="Camus J.-C."/>
            <person name="Medina N."/>
            <person name="Mansoor H."/>
            <person name="Pryor M."/>
            <person name="Duthoy S."/>
            <person name="Grondin S."/>
            <person name="Lacroix C."/>
            <person name="Monsempe C."/>
            <person name="Simon S."/>
            <person name="Harris B."/>
            <person name="Atkin R."/>
            <person name="Doggett J."/>
            <person name="Mayes R."/>
            <person name="Keating L."/>
            <person name="Wheeler P.R."/>
            <person name="Parkhill J."/>
            <person name="Barrell B.G."/>
            <person name="Cole S.T."/>
            <person name="Gordon S.V."/>
            <person name="Hewinson R.G."/>
        </authorList>
    </citation>
    <scope>NUCLEOTIDE SEQUENCE [LARGE SCALE GENOMIC DNA]</scope>
    <source>
        <strain>ATCC BAA-935 / AF2122/97</strain>
    </source>
</reference>
<reference key="2">
    <citation type="journal article" date="2017" name="Genome Announc.">
        <title>Updated reference genome sequence and annotation of Mycobacterium bovis AF2122/97.</title>
        <authorList>
            <person name="Malone K.M."/>
            <person name="Farrell D."/>
            <person name="Stuber T.P."/>
            <person name="Schubert O.T."/>
            <person name="Aebersold R."/>
            <person name="Robbe-Austerman S."/>
            <person name="Gordon S.V."/>
        </authorList>
    </citation>
    <scope>NUCLEOTIDE SEQUENCE [LARGE SCALE GENOMIC DNA]</scope>
    <scope>GENOME REANNOTATION</scope>
    <source>
        <strain>ATCC BAA-935 / AF2122/97</strain>
    </source>
</reference>
<accession>P66898</accession>
<accession>A0A1R3XYP5</accession>
<accession>Q10766</accession>
<accession>X2BII6</accession>
<name>ILVA_MYCBO</name>